<keyword id="KW-0067">ATP-binding</keyword>
<keyword id="KW-0963">Cytoplasm</keyword>
<keyword id="KW-1015">Disulfide bond</keyword>
<keyword id="KW-0547">Nucleotide-binding</keyword>
<keyword id="KW-1185">Reference proteome</keyword>
<keyword id="KW-0694">RNA-binding</keyword>
<keyword id="KW-0808">Transferase</keyword>
<keyword id="KW-0819">tRNA processing</keyword>
<keyword id="KW-0820">tRNA-binding</keyword>
<comment type="function">
    <text evidence="1">Catalyzes the 2-thiolation of uridine at the wobble position (U34) of tRNA, leading to the formation of s(2)U34.</text>
</comment>
<comment type="catalytic activity">
    <reaction evidence="1">
        <text>S-sulfanyl-L-cysteinyl-[protein] + uridine(34) in tRNA + AH2 + ATP = 2-thiouridine(34) in tRNA + L-cysteinyl-[protein] + A + AMP + diphosphate + H(+)</text>
        <dbReference type="Rhea" id="RHEA:47032"/>
        <dbReference type="Rhea" id="RHEA-COMP:10131"/>
        <dbReference type="Rhea" id="RHEA-COMP:11726"/>
        <dbReference type="Rhea" id="RHEA-COMP:11727"/>
        <dbReference type="Rhea" id="RHEA-COMP:11728"/>
        <dbReference type="ChEBI" id="CHEBI:13193"/>
        <dbReference type="ChEBI" id="CHEBI:15378"/>
        <dbReference type="ChEBI" id="CHEBI:17499"/>
        <dbReference type="ChEBI" id="CHEBI:29950"/>
        <dbReference type="ChEBI" id="CHEBI:30616"/>
        <dbReference type="ChEBI" id="CHEBI:33019"/>
        <dbReference type="ChEBI" id="CHEBI:61963"/>
        <dbReference type="ChEBI" id="CHEBI:65315"/>
        <dbReference type="ChEBI" id="CHEBI:87170"/>
        <dbReference type="ChEBI" id="CHEBI:456215"/>
        <dbReference type="EC" id="2.8.1.13"/>
    </reaction>
</comment>
<comment type="subcellular location">
    <subcellularLocation>
        <location evidence="1">Cytoplasm</location>
    </subcellularLocation>
</comment>
<comment type="similarity">
    <text evidence="1">Belongs to the MnmA/TRMU family.</text>
</comment>
<dbReference type="EC" id="2.8.1.13" evidence="1"/>
<dbReference type="EMBL" id="CP001047">
    <property type="protein sequence ID" value="ACF07120.1"/>
    <property type="molecule type" value="Genomic_DNA"/>
</dbReference>
<dbReference type="RefSeq" id="WP_012498077.1">
    <property type="nucleotide sequence ID" value="NC_011025.1"/>
</dbReference>
<dbReference type="SMR" id="B3PM68"/>
<dbReference type="STRING" id="243272.MARTH_orf201"/>
<dbReference type="KEGG" id="mat:MARTH_orf201"/>
<dbReference type="eggNOG" id="COG0482">
    <property type="taxonomic scope" value="Bacteria"/>
</dbReference>
<dbReference type="HOGENOM" id="CLU_035188_1_0_14"/>
<dbReference type="Proteomes" id="UP000008812">
    <property type="component" value="Chromosome"/>
</dbReference>
<dbReference type="GO" id="GO:0005737">
    <property type="term" value="C:cytoplasm"/>
    <property type="evidence" value="ECO:0007669"/>
    <property type="project" value="UniProtKB-SubCell"/>
</dbReference>
<dbReference type="GO" id="GO:0005524">
    <property type="term" value="F:ATP binding"/>
    <property type="evidence" value="ECO:0007669"/>
    <property type="project" value="UniProtKB-KW"/>
</dbReference>
<dbReference type="GO" id="GO:0000049">
    <property type="term" value="F:tRNA binding"/>
    <property type="evidence" value="ECO:0007669"/>
    <property type="project" value="UniProtKB-KW"/>
</dbReference>
<dbReference type="GO" id="GO:0103016">
    <property type="term" value="F:tRNA-uridine 2-sulfurtransferase activity"/>
    <property type="evidence" value="ECO:0007669"/>
    <property type="project" value="UniProtKB-EC"/>
</dbReference>
<dbReference type="GO" id="GO:0002143">
    <property type="term" value="P:tRNA wobble position uridine thiolation"/>
    <property type="evidence" value="ECO:0007669"/>
    <property type="project" value="TreeGrafter"/>
</dbReference>
<dbReference type="CDD" id="cd01998">
    <property type="entry name" value="MnmA_TRMU-like"/>
    <property type="match status" value="1"/>
</dbReference>
<dbReference type="FunFam" id="2.30.30.280:FF:000001">
    <property type="entry name" value="tRNA-specific 2-thiouridylase MnmA"/>
    <property type="match status" value="1"/>
</dbReference>
<dbReference type="FunFam" id="3.40.50.620:FF:000115">
    <property type="entry name" value="tRNA-specific 2-thiouridylase MnmA"/>
    <property type="match status" value="1"/>
</dbReference>
<dbReference type="Gene3D" id="2.30.30.280">
    <property type="entry name" value="Adenine nucleotide alpha hydrolases-like domains"/>
    <property type="match status" value="1"/>
</dbReference>
<dbReference type="Gene3D" id="3.40.50.620">
    <property type="entry name" value="HUPs"/>
    <property type="match status" value="1"/>
</dbReference>
<dbReference type="Gene3D" id="2.40.30.10">
    <property type="entry name" value="Translation factors"/>
    <property type="match status" value="1"/>
</dbReference>
<dbReference type="HAMAP" id="MF_00144">
    <property type="entry name" value="tRNA_thiouridyl_MnmA"/>
    <property type="match status" value="1"/>
</dbReference>
<dbReference type="InterPro" id="IPR004506">
    <property type="entry name" value="MnmA-like"/>
</dbReference>
<dbReference type="InterPro" id="IPR046885">
    <property type="entry name" value="MnmA-like_C"/>
</dbReference>
<dbReference type="InterPro" id="IPR046884">
    <property type="entry name" value="MnmA-like_central"/>
</dbReference>
<dbReference type="InterPro" id="IPR023382">
    <property type="entry name" value="MnmA-like_central_sf"/>
</dbReference>
<dbReference type="InterPro" id="IPR014729">
    <property type="entry name" value="Rossmann-like_a/b/a_fold"/>
</dbReference>
<dbReference type="NCBIfam" id="NF001138">
    <property type="entry name" value="PRK00143.1"/>
    <property type="match status" value="1"/>
</dbReference>
<dbReference type="NCBIfam" id="TIGR00420">
    <property type="entry name" value="trmU"/>
    <property type="match status" value="1"/>
</dbReference>
<dbReference type="PANTHER" id="PTHR11933:SF5">
    <property type="entry name" value="MITOCHONDRIAL TRNA-SPECIFIC 2-THIOURIDYLASE 1"/>
    <property type="match status" value="1"/>
</dbReference>
<dbReference type="PANTHER" id="PTHR11933">
    <property type="entry name" value="TRNA 5-METHYLAMINOMETHYL-2-THIOURIDYLATE -METHYLTRANSFERASE"/>
    <property type="match status" value="1"/>
</dbReference>
<dbReference type="Pfam" id="PF03054">
    <property type="entry name" value="tRNA_Me_trans"/>
    <property type="match status" value="1"/>
</dbReference>
<dbReference type="Pfam" id="PF20258">
    <property type="entry name" value="tRNA_Me_trans_C"/>
    <property type="match status" value="1"/>
</dbReference>
<dbReference type="Pfam" id="PF20259">
    <property type="entry name" value="tRNA_Me_trans_M"/>
    <property type="match status" value="1"/>
</dbReference>
<dbReference type="SUPFAM" id="SSF52402">
    <property type="entry name" value="Adenine nucleotide alpha hydrolases-like"/>
    <property type="match status" value="1"/>
</dbReference>
<sequence>MAKRVVLGMSGGVDSSVCAYLLQQQGYEVVGLFMRNWDSFLNNDFLGNEAISQDVCPQEQDYADAKEVAKQLNIPLYRVDFIKEYWDHVFSYLIEEYKIGRTPNPDIFCNKYIKFNFFAQVAFSKYQADFIAMGHYAYCENGELFKAKDDSKDQSYFLAQLSNEQLKKVIFPLANLTKQEVREIAKNLNLATATKKDSTGICFIGERKFTKFLENYIPAQPGKIIDIATKQVVGSHIGTMYYTIGQRKGLNLGGFSKPYFVVGHNLEKKVLYVANEDFPEYLLSDKLIAIGFNQIAYKFDTNNLSAKFRYRQKDIPIKLKLLANSEIEVSYNDTEAVTPGQEIVIYDGNKVVGGAIINEVFYKNQKKTYI</sequence>
<reference key="1">
    <citation type="journal article" date="2008" name="Infect. Immun.">
        <title>Genome of Mycoplasma arthritidis.</title>
        <authorList>
            <person name="Dybvig K."/>
            <person name="Zuhua C."/>
            <person name="Lao P."/>
            <person name="Jordan D.S."/>
            <person name="French C.T."/>
            <person name="Tu A.H."/>
            <person name="Loraine A.E."/>
        </authorList>
    </citation>
    <scope>NUCLEOTIDE SEQUENCE [LARGE SCALE GENOMIC DNA]</scope>
    <source>
        <strain>158L3-1</strain>
    </source>
</reference>
<proteinExistence type="inferred from homology"/>
<evidence type="ECO:0000255" key="1">
    <source>
        <dbReference type="HAMAP-Rule" id="MF_00144"/>
    </source>
</evidence>
<gene>
    <name evidence="1" type="primary">mnmA</name>
    <name type="ordered locus">MARTH_orf201</name>
</gene>
<organism>
    <name type="scientific">Metamycoplasma arthritidis (strain 158L3-1)</name>
    <name type="common">Mycoplasma arthritidis</name>
    <dbReference type="NCBI Taxonomy" id="243272"/>
    <lineage>
        <taxon>Bacteria</taxon>
        <taxon>Bacillati</taxon>
        <taxon>Mycoplasmatota</taxon>
        <taxon>Mycoplasmoidales</taxon>
        <taxon>Metamycoplasmataceae</taxon>
        <taxon>Metamycoplasma</taxon>
    </lineage>
</organism>
<accession>B3PM68</accession>
<name>MNMA_META1</name>
<protein>
    <recommendedName>
        <fullName evidence="1">tRNA-specific 2-thiouridylase MnmA</fullName>
        <ecNumber evidence="1">2.8.1.13</ecNumber>
    </recommendedName>
</protein>
<feature type="chain" id="PRO_1000096297" description="tRNA-specific 2-thiouridylase MnmA">
    <location>
        <begin position="1"/>
        <end position="370"/>
    </location>
</feature>
<feature type="region of interest" description="Interaction with target base in tRNA" evidence="1">
    <location>
        <begin position="104"/>
        <end position="106"/>
    </location>
</feature>
<feature type="region of interest" description="Interaction with tRNA" evidence="1">
    <location>
        <begin position="152"/>
        <end position="154"/>
    </location>
</feature>
<feature type="region of interest" description="Interaction with tRNA" evidence="1">
    <location>
        <begin position="309"/>
        <end position="310"/>
    </location>
</feature>
<feature type="active site" description="Nucleophile" evidence="1">
    <location>
        <position position="109"/>
    </location>
</feature>
<feature type="active site" description="Cysteine persulfide intermediate" evidence="1">
    <location>
        <position position="202"/>
    </location>
</feature>
<feature type="binding site" evidence="1">
    <location>
        <begin position="8"/>
        <end position="15"/>
    </location>
    <ligand>
        <name>ATP</name>
        <dbReference type="ChEBI" id="CHEBI:30616"/>
    </ligand>
</feature>
<feature type="binding site" evidence="1">
    <location>
        <position position="34"/>
    </location>
    <ligand>
        <name>ATP</name>
        <dbReference type="ChEBI" id="CHEBI:30616"/>
    </ligand>
</feature>
<feature type="binding site" evidence="1">
    <location>
        <position position="134"/>
    </location>
    <ligand>
        <name>ATP</name>
        <dbReference type="ChEBI" id="CHEBI:30616"/>
    </ligand>
</feature>
<feature type="site" description="Interaction with tRNA" evidence="1">
    <location>
        <position position="135"/>
    </location>
</feature>
<feature type="site" description="Interaction with tRNA" evidence="1">
    <location>
        <position position="341"/>
    </location>
</feature>
<feature type="disulfide bond" description="Alternate" evidence="1">
    <location>
        <begin position="109"/>
        <end position="202"/>
    </location>
</feature>